<accession>P0CC91</accession>
<accession>B1NWJ4</accession>
<reference key="1">
    <citation type="journal article" date="2008" name="Theor. Appl. Genet.">
        <title>The complete nucleotide sequence of the cassava (Manihot esculenta) chloroplast genome and the evolution of atpF in Malpighiales: RNA editing and multiple losses of a group II intron.</title>
        <authorList>
            <person name="Daniell H."/>
            <person name="Wurdack K.J."/>
            <person name="Kanagaraj A."/>
            <person name="Lee S.-B."/>
            <person name="Saski C."/>
            <person name="Jansen R.K."/>
        </authorList>
    </citation>
    <scope>NUCLEOTIDE SEQUENCE [LARGE SCALE GENOMIC DNA]</scope>
    <source>
        <strain>cv. TME3</strain>
    </source>
</reference>
<feature type="chain" id="PRO_0000391283" description="NAD(P)H-quinone oxidoreductase subunit 2 B, chloroplastic">
    <location>
        <begin position="1"/>
        <end position="510"/>
    </location>
</feature>
<feature type="transmembrane region" description="Helical" evidence="1">
    <location>
        <begin position="24"/>
        <end position="44"/>
    </location>
</feature>
<feature type="transmembrane region" description="Helical" evidence="1">
    <location>
        <begin position="57"/>
        <end position="77"/>
    </location>
</feature>
<feature type="transmembrane region" description="Helical" evidence="1">
    <location>
        <begin position="99"/>
        <end position="119"/>
    </location>
</feature>
<feature type="transmembrane region" description="Helical" evidence="1">
    <location>
        <begin position="124"/>
        <end position="144"/>
    </location>
</feature>
<feature type="transmembrane region" description="Helical" evidence="1">
    <location>
        <begin position="149"/>
        <end position="169"/>
    </location>
</feature>
<feature type="transmembrane region" description="Helical" evidence="1">
    <location>
        <begin position="183"/>
        <end position="203"/>
    </location>
</feature>
<feature type="transmembrane region" description="Helical" evidence="1">
    <location>
        <begin position="227"/>
        <end position="247"/>
    </location>
</feature>
<feature type="transmembrane region" description="Helical" evidence="1">
    <location>
        <begin position="295"/>
        <end position="315"/>
    </location>
</feature>
<feature type="transmembrane region" description="Helical" evidence="1">
    <location>
        <begin position="323"/>
        <end position="343"/>
    </location>
</feature>
<feature type="transmembrane region" description="Helical" evidence="1">
    <location>
        <begin position="354"/>
        <end position="374"/>
    </location>
</feature>
<feature type="transmembrane region" description="Helical" evidence="1">
    <location>
        <begin position="395"/>
        <end position="415"/>
    </location>
</feature>
<feature type="transmembrane region" description="Helical" evidence="1">
    <location>
        <begin position="418"/>
        <end position="438"/>
    </location>
</feature>
<feature type="transmembrane region" description="Helical" evidence="1">
    <location>
        <begin position="482"/>
        <end position="502"/>
    </location>
</feature>
<comment type="function">
    <text evidence="1">NDH shuttles electrons from NAD(P)H:plastoquinone, via FMN and iron-sulfur (Fe-S) centers, to quinones in the photosynthetic chain and possibly in a chloroplast respiratory chain. The immediate electron acceptor for the enzyme in this species is believed to be plastoquinone. Couples the redox reaction to proton translocation, and thus conserves the redox energy in a proton gradient.</text>
</comment>
<comment type="catalytic activity">
    <reaction evidence="1">
        <text>a plastoquinone + NADH + (n+1) H(+)(in) = a plastoquinol + NAD(+) + n H(+)(out)</text>
        <dbReference type="Rhea" id="RHEA:42608"/>
        <dbReference type="Rhea" id="RHEA-COMP:9561"/>
        <dbReference type="Rhea" id="RHEA-COMP:9562"/>
        <dbReference type="ChEBI" id="CHEBI:15378"/>
        <dbReference type="ChEBI" id="CHEBI:17757"/>
        <dbReference type="ChEBI" id="CHEBI:57540"/>
        <dbReference type="ChEBI" id="CHEBI:57945"/>
        <dbReference type="ChEBI" id="CHEBI:62192"/>
    </reaction>
</comment>
<comment type="catalytic activity">
    <reaction evidence="1">
        <text>a plastoquinone + NADPH + (n+1) H(+)(in) = a plastoquinol + NADP(+) + n H(+)(out)</text>
        <dbReference type="Rhea" id="RHEA:42612"/>
        <dbReference type="Rhea" id="RHEA-COMP:9561"/>
        <dbReference type="Rhea" id="RHEA-COMP:9562"/>
        <dbReference type="ChEBI" id="CHEBI:15378"/>
        <dbReference type="ChEBI" id="CHEBI:17757"/>
        <dbReference type="ChEBI" id="CHEBI:57783"/>
        <dbReference type="ChEBI" id="CHEBI:58349"/>
        <dbReference type="ChEBI" id="CHEBI:62192"/>
    </reaction>
</comment>
<comment type="subunit">
    <text evidence="1">NDH is composed of at least 16 different subunits, 5 of which are encoded in the nucleus.</text>
</comment>
<comment type="subcellular location">
    <subcellularLocation>
        <location evidence="1">Plastid</location>
        <location evidence="1">Chloroplast thylakoid membrane</location>
        <topology evidence="1">Multi-pass membrane protein</topology>
    </subcellularLocation>
</comment>
<comment type="similarity">
    <text evidence="1">Belongs to the complex I subunit 2 family.</text>
</comment>
<evidence type="ECO:0000255" key="1">
    <source>
        <dbReference type="HAMAP-Rule" id="MF_00445"/>
    </source>
</evidence>
<dbReference type="EC" id="7.1.1.-" evidence="1"/>
<dbReference type="EMBL" id="EU117376">
    <property type="protein sequence ID" value="ABV66214.1"/>
    <property type="molecule type" value="Genomic_DNA"/>
</dbReference>
<dbReference type="SMR" id="P0CC91"/>
<dbReference type="KEGG" id="mesc:6000013"/>
<dbReference type="KEGG" id="mesc:6000058"/>
<dbReference type="OrthoDB" id="1621789at2759"/>
<dbReference type="GO" id="GO:0009535">
    <property type="term" value="C:chloroplast thylakoid membrane"/>
    <property type="evidence" value="ECO:0007669"/>
    <property type="project" value="UniProtKB-SubCell"/>
</dbReference>
<dbReference type="GO" id="GO:0008137">
    <property type="term" value="F:NADH dehydrogenase (ubiquinone) activity"/>
    <property type="evidence" value="ECO:0007669"/>
    <property type="project" value="InterPro"/>
</dbReference>
<dbReference type="GO" id="GO:0048038">
    <property type="term" value="F:quinone binding"/>
    <property type="evidence" value="ECO:0007669"/>
    <property type="project" value="UniProtKB-KW"/>
</dbReference>
<dbReference type="GO" id="GO:0042773">
    <property type="term" value="P:ATP synthesis coupled electron transport"/>
    <property type="evidence" value="ECO:0007669"/>
    <property type="project" value="InterPro"/>
</dbReference>
<dbReference type="GO" id="GO:0019684">
    <property type="term" value="P:photosynthesis, light reaction"/>
    <property type="evidence" value="ECO:0007669"/>
    <property type="project" value="UniProtKB-UniRule"/>
</dbReference>
<dbReference type="HAMAP" id="MF_00445">
    <property type="entry name" value="NDH1_NuoN_1"/>
    <property type="match status" value="1"/>
</dbReference>
<dbReference type="InterPro" id="IPR010096">
    <property type="entry name" value="NADH-Q_OxRdtase_suN/2"/>
</dbReference>
<dbReference type="InterPro" id="IPR001750">
    <property type="entry name" value="ND/Mrp_TM"/>
</dbReference>
<dbReference type="InterPro" id="IPR045693">
    <property type="entry name" value="Ndh2_N"/>
</dbReference>
<dbReference type="NCBIfam" id="TIGR01770">
    <property type="entry name" value="NDH_I_N"/>
    <property type="match status" value="1"/>
</dbReference>
<dbReference type="NCBIfam" id="NF002701">
    <property type="entry name" value="PRK02504.1"/>
    <property type="match status" value="1"/>
</dbReference>
<dbReference type="PANTHER" id="PTHR22773">
    <property type="entry name" value="NADH DEHYDROGENASE"/>
    <property type="match status" value="1"/>
</dbReference>
<dbReference type="Pfam" id="PF19530">
    <property type="entry name" value="Ndh2_N"/>
    <property type="match status" value="1"/>
</dbReference>
<dbReference type="Pfam" id="PF00361">
    <property type="entry name" value="Proton_antipo_M"/>
    <property type="match status" value="1"/>
</dbReference>
<gene>
    <name evidence="1" type="primary">ndhB2</name>
</gene>
<organism>
    <name type="scientific">Manihot esculenta</name>
    <name type="common">Cassava</name>
    <name type="synonym">Jatropha manihot</name>
    <dbReference type="NCBI Taxonomy" id="3983"/>
    <lineage>
        <taxon>Eukaryota</taxon>
        <taxon>Viridiplantae</taxon>
        <taxon>Streptophyta</taxon>
        <taxon>Embryophyta</taxon>
        <taxon>Tracheophyta</taxon>
        <taxon>Spermatophyta</taxon>
        <taxon>Magnoliopsida</taxon>
        <taxon>eudicotyledons</taxon>
        <taxon>Gunneridae</taxon>
        <taxon>Pentapetalae</taxon>
        <taxon>rosids</taxon>
        <taxon>fabids</taxon>
        <taxon>Malpighiales</taxon>
        <taxon>Euphorbiaceae</taxon>
        <taxon>Crotonoideae</taxon>
        <taxon>Manihoteae</taxon>
        <taxon>Manihot</taxon>
    </lineage>
</organism>
<name>NU2C2_MANES</name>
<sequence length="510" mass="56639">MIWHVQNENFILDSTRIFMKAFHLLLFDGSFIFPECILIFGLILLLMIDSTSDQKDIPWLYFISSTSLVMSITALLFRWREEPMISFSGNFQTNNFNEIFQFLILLCSTLCIPLSVEYIECTEMAITEFLLFVLTATLGGMFLCGANDLITIFVAPECFSLCSYLLSGYTKKDVRSNEATTKYLLMGGASSSILVHAFSWLYGSSGGEIELQEIVNGLINTQMYNSPGISIALIFITVGIGFKLSLAPSHQWTPDVYEGSPTPVVAFLSVTSKVAASASATRIFDIPFYFSSNEWHLLLEILAILSMIVGNLIAITQTSMKRMLAYSSIGQIGYVIIGIIVGDSNGGYASMITYMLFYISMNLGTFACIVLFGLRTGTDNIRDYAGLYTKDPFLALSLALCLLSLGGLPPLAGFFGKLHLFWCGWQAGLYFLVLIGLLTSVVSIYYYLKIIKLLMTGRNQEITPHVRNYRRSPLRSNNSIELSMIVCVIASTIPGISMNPIVEIAQDTLF</sequence>
<geneLocation type="chloroplast"/>
<keyword id="KW-0150">Chloroplast</keyword>
<keyword id="KW-0472">Membrane</keyword>
<keyword id="KW-0520">NAD</keyword>
<keyword id="KW-0521">NADP</keyword>
<keyword id="KW-0934">Plastid</keyword>
<keyword id="KW-0618">Plastoquinone</keyword>
<keyword id="KW-0874">Quinone</keyword>
<keyword id="KW-0793">Thylakoid</keyword>
<keyword id="KW-1278">Translocase</keyword>
<keyword id="KW-0812">Transmembrane</keyword>
<keyword id="KW-1133">Transmembrane helix</keyword>
<keyword id="KW-0813">Transport</keyword>
<protein>
    <recommendedName>
        <fullName evidence="1">NAD(P)H-quinone oxidoreductase subunit 2 B, chloroplastic</fullName>
        <ecNumber evidence="1">7.1.1.-</ecNumber>
    </recommendedName>
    <alternativeName>
        <fullName evidence="1">NAD(P)H dehydrogenase, subunit 2 B</fullName>
    </alternativeName>
    <alternativeName>
        <fullName evidence="1">NADH-plastoquinone oxidoreductase subunit 2 B</fullName>
    </alternativeName>
</protein>
<proteinExistence type="inferred from homology"/>